<protein>
    <recommendedName>
        <fullName evidence="1">Ribonuclease HII</fullName>
        <shortName evidence="1">RNase HII</shortName>
        <ecNumber evidence="1">3.1.26.4</ecNumber>
    </recommendedName>
</protein>
<keyword id="KW-0963">Cytoplasm</keyword>
<keyword id="KW-0255">Endonuclease</keyword>
<keyword id="KW-0378">Hydrolase</keyword>
<keyword id="KW-0464">Manganese</keyword>
<keyword id="KW-0479">Metal-binding</keyword>
<keyword id="KW-0540">Nuclease</keyword>
<comment type="function">
    <text evidence="1">Endonuclease that specifically degrades the RNA of RNA-DNA hybrids.</text>
</comment>
<comment type="catalytic activity">
    <reaction evidence="1">
        <text>Endonucleolytic cleavage to 5'-phosphomonoester.</text>
        <dbReference type="EC" id="3.1.26.4"/>
    </reaction>
</comment>
<comment type="cofactor">
    <cofactor evidence="1">
        <name>Mn(2+)</name>
        <dbReference type="ChEBI" id="CHEBI:29035"/>
    </cofactor>
    <cofactor evidence="1">
        <name>Mg(2+)</name>
        <dbReference type="ChEBI" id="CHEBI:18420"/>
    </cofactor>
    <text evidence="1">Manganese or magnesium. Binds 1 divalent metal ion per monomer in the absence of substrate. May bind a second metal ion after substrate binding.</text>
</comment>
<comment type="subcellular location">
    <subcellularLocation>
        <location evidence="1">Cytoplasm</location>
    </subcellularLocation>
</comment>
<comment type="similarity">
    <text evidence="1">Belongs to the RNase HII family.</text>
</comment>
<proteinExistence type="inferred from homology"/>
<organism>
    <name type="scientific">Francisella tularensis subsp. holarctica (strain OSU18)</name>
    <dbReference type="NCBI Taxonomy" id="393011"/>
    <lineage>
        <taxon>Bacteria</taxon>
        <taxon>Pseudomonadati</taxon>
        <taxon>Pseudomonadota</taxon>
        <taxon>Gammaproteobacteria</taxon>
        <taxon>Thiotrichales</taxon>
        <taxon>Francisellaceae</taxon>
        <taxon>Francisella</taxon>
    </lineage>
</organism>
<gene>
    <name evidence="1" type="primary">rnhB</name>
    <name type="ordered locus">FTH_1158</name>
</gene>
<name>RNH2_FRATO</name>
<accession>Q0BLL3</accession>
<reference key="1">
    <citation type="journal article" date="2006" name="J. Bacteriol.">
        <title>Chromosome rearrangement and diversification of Francisella tularensis revealed by the type B (OSU18) genome sequence.</title>
        <authorList>
            <person name="Petrosino J.F."/>
            <person name="Xiang Q."/>
            <person name="Karpathy S.E."/>
            <person name="Jiang H."/>
            <person name="Yerrapragada S."/>
            <person name="Liu Y."/>
            <person name="Gioia J."/>
            <person name="Hemphill L."/>
            <person name="Gonzalez A."/>
            <person name="Raghavan T.M."/>
            <person name="Uzman A."/>
            <person name="Fox G.E."/>
            <person name="Highlander S."/>
            <person name="Reichard M."/>
            <person name="Morton R.J."/>
            <person name="Clinkenbeard K.D."/>
            <person name="Weinstock G.M."/>
        </authorList>
    </citation>
    <scope>NUCLEOTIDE SEQUENCE [LARGE SCALE GENOMIC DNA]</scope>
    <source>
        <strain>OSU18</strain>
    </source>
</reference>
<sequence>MIILGIDEAGRGPLSGPVVAAGVILDQDKIIDGLADSKKLTEKKRQSLYQQIITHAKAYTIVEISPQQIDELNILQATLKAIHQVANNLERQFDKVLVDGNKLPNWDYNSEAIVKGDSKIIEISAASILAKVHRDNICLEHDRLYPQYGFAKHKGYPTKEHLENIKKYGVLDIHRKSYKPVQVLLNE</sequence>
<dbReference type="EC" id="3.1.26.4" evidence="1"/>
<dbReference type="EMBL" id="CP000437">
    <property type="protein sequence ID" value="ABI83021.1"/>
    <property type="molecule type" value="Genomic_DNA"/>
</dbReference>
<dbReference type="RefSeq" id="WP_003016244.1">
    <property type="nucleotide sequence ID" value="NC_017463.1"/>
</dbReference>
<dbReference type="SMR" id="Q0BLL3"/>
<dbReference type="KEGG" id="fth:FTH_1158"/>
<dbReference type="GO" id="GO:0005737">
    <property type="term" value="C:cytoplasm"/>
    <property type="evidence" value="ECO:0007669"/>
    <property type="project" value="UniProtKB-SubCell"/>
</dbReference>
<dbReference type="GO" id="GO:0032299">
    <property type="term" value="C:ribonuclease H2 complex"/>
    <property type="evidence" value="ECO:0007669"/>
    <property type="project" value="TreeGrafter"/>
</dbReference>
<dbReference type="GO" id="GO:0030145">
    <property type="term" value="F:manganese ion binding"/>
    <property type="evidence" value="ECO:0007669"/>
    <property type="project" value="UniProtKB-UniRule"/>
</dbReference>
<dbReference type="GO" id="GO:0003723">
    <property type="term" value="F:RNA binding"/>
    <property type="evidence" value="ECO:0007669"/>
    <property type="project" value="InterPro"/>
</dbReference>
<dbReference type="GO" id="GO:0004523">
    <property type="term" value="F:RNA-DNA hybrid ribonuclease activity"/>
    <property type="evidence" value="ECO:0007669"/>
    <property type="project" value="UniProtKB-UniRule"/>
</dbReference>
<dbReference type="GO" id="GO:0043137">
    <property type="term" value="P:DNA replication, removal of RNA primer"/>
    <property type="evidence" value="ECO:0007669"/>
    <property type="project" value="TreeGrafter"/>
</dbReference>
<dbReference type="GO" id="GO:0006298">
    <property type="term" value="P:mismatch repair"/>
    <property type="evidence" value="ECO:0007669"/>
    <property type="project" value="TreeGrafter"/>
</dbReference>
<dbReference type="CDD" id="cd07182">
    <property type="entry name" value="RNase_HII_bacteria_HII_like"/>
    <property type="match status" value="1"/>
</dbReference>
<dbReference type="FunFam" id="3.30.420.10:FF:000006">
    <property type="entry name" value="Ribonuclease HII"/>
    <property type="match status" value="1"/>
</dbReference>
<dbReference type="Gene3D" id="3.30.420.10">
    <property type="entry name" value="Ribonuclease H-like superfamily/Ribonuclease H"/>
    <property type="match status" value="1"/>
</dbReference>
<dbReference type="HAMAP" id="MF_00052_B">
    <property type="entry name" value="RNase_HII_B"/>
    <property type="match status" value="1"/>
</dbReference>
<dbReference type="InterPro" id="IPR022898">
    <property type="entry name" value="RNase_HII"/>
</dbReference>
<dbReference type="InterPro" id="IPR001352">
    <property type="entry name" value="RNase_HII/HIII"/>
</dbReference>
<dbReference type="InterPro" id="IPR024567">
    <property type="entry name" value="RNase_HII/HIII_dom"/>
</dbReference>
<dbReference type="InterPro" id="IPR012337">
    <property type="entry name" value="RNaseH-like_sf"/>
</dbReference>
<dbReference type="InterPro" id="IPR036397">
    <property type="entry name" value="RNaseH_sf"/>
</dbReference>
<dbReference type="NCBIfam" id="NF000595">
    <property type="entry name" value="PRK00015.1-3"/>
    <property type="match status" value="1"/>
</dbReference>
<dbReference type="NCBIfam" id="NF000596">
    <property type="entry name" value="PRK00015.1-4"/>
    <property type="match status" value="1"/>
</dbReference>
<dbReference type="PANTHER" id="PTHR10954">
    <property type="entry name" value="RIBONUCLEASE H2 SUBUNIT A"/>
    <property type="match status" value="1"/>
</dbReference>
<dbReference type="PANTHER" id="PTHR10954:SF18">
    <property type="entry name" value="RIBONUCLEASE HII"/>
    <property type="match status" value="1"/>
</dbReference>
<dbReference type="Pfam" id="PF01351">
    <property type="entry name" value="RNase_HII"/>
    <property type="match status" value="1"/>
</dbReference>
<dbReference type="SUPFAM" id="SSF53098">
    <property type="entry name" value="Ribonuclease H-like"/>
    <property type="match status" value="1"/>
</dbReference>
<dbReference type="PROSITE" id="PS51975">
    <property type="entry name" value="RNASE_H_2"/>
    <property type="match status" value="1"/>
</dbReference>
<feature type="chain" id="PRO_1000031145" description="Ribonuclease HII">
    <location>
        <begin position="1"/>
        <end position="187"/>
    </location>
</feature>
<feature type="domain" description="RNase H type-2" evidence="2">
    <location>
        <begin position="1"/>
        <end position="187"/>
    </location>
</feature>
<feature type="binding site" evidence="1">
    <location>
        <position position="7"/>
    </location>
    <ligand>
        <name>a divalent metal cation</name>
        <dbReference type="ChEBI" id="CHEBI:60240"/>
    </ligand>
</feature>
<feature type="binding site" evidence="1">
    <location>
        <position position="8"/>
    </location>
    <ligand>
        <name>a divalent metal cation</name>
        <dbReference type="ChEBI" id="CHEBI:60240"/>
    </ligand>
</feature>
<feature type="binding site" evidence="1">
    <location>
        <position position="99"/>
    </location>
    <ligand>
        <name>a divalent metal cation</name>
        <dbReference type="ChEBI" id="CHEBI:60240"/>
    </ligand>
</feature>
<evidence type="ECO:0000255" key="1">
    <source>
        <dbReference type="HAMAP-Rule" id="MF_00052"/>
    </source>
</evidence>
<evidence type="ECO:0000255" key="2">
    <source>
        <dbReference type="PROSITE-ProRule" id="PRU01319"/>
    </source>
</evidence>